<accession>A2QCV0</accession>
<sequence length="546" mass="59779">MSASASLSAGSDASGPGSPAGDQGNALPQLDSLISHLVAAKRSLSSINHVWRANEIVTSARSALEESVVISARTGFLRRGLNNQLRLLYSVRSEVEEVSLRGRSEFASVLKSLDTADARLRKTLDSLRDTIVHASFRPEGEEPRSLHDFVDERGVEELRAALKSSIDRTNEAQAELDTSNSAFDDELQSIKQALGNYREATKLASSSSSSSSASNSSLPSLSSMPPMLQSLEMHAQEMANLLESLVQHFDLCVTAVKHTEGGGAAARSITGDMPAAVTVSGRGVPNIEQGIHDNLNAPLDPLSESDYQEMVNVLIKDAAEAEDVVMEIQDRIGDMESILENILSQRDVLLSIYNATIGVFRHLSSLATARLPGYIAQAHSFTRVWGEEHDRINGGLADLSDLNTLYDGFLEAYDGLILEVARRRHVRQRVEKVLRETKHKLDQLYEEDVNARETFRVEQGDYLPSDIWPGIGREPMRIEFRRISGGILKGAPPEQPDAQDQPAAEPNEPQSGPSETTEEGEIIPHLPKSLVEEALHRLKARNRQAM</sequence>
<gene>
    <name type="primary">atg17</name>
    <name type="ORF">An02g04820</name>
</gene>
<evidence type="ECO:0000250" key="1"/>
<evidence type="ECO:0000255" key="2"/>
<evidence type="ECO:0000256" key="3">
    <source>
        <dbReference type="SAM" id="MobiDB-lite"/>
    </source>
</evidence>
<evidence type="ECO:0000305" key="4"/>
<organism>
    <name type="scientific">Aspergillus niger (strain ATCC MYA-4892 / CBS 513.88 / FGSC A1513)</name>
    <dbReference type="NCBI Taxonomy" id="425011"/>
    <lineage>
        <taxon>Eukaryota</taxon>
        <taxon>Fungi</taxon>
        <taxon>Dikarya</taxon>
        <taxon>Ascomycota</taxon>
        <taxon>Pezizomycotina</taxon>
        <taxon>Eurotiomycetes</taxon>
        <taxon>Eurotiomycetidae</taxon>
        <taxon>Eurotiales</taxon>
        <taxon>Aspergillaceae</taxon>
        <taxon>Aspergillus</taxon>
        <taxon>Aspergillus subgen. Circumdati</taxon>
    </lineage>
</organism>
<reference key="1">
    <citation type="journal article" date="2007" name="Nat. Biotechnol.">
        <title>Genome sequencing and analysis of the versatile cell factory Aspergillus niger CBS 513.88.</title>
        <authorList>
            <person name="Pel H.J."/>
            <person name="de Winde J.H."/>
            <person name="Archer D.B."/>
            <person name="Dyer P.S."/>
            <person name="Hofmann G."/>
            <person name="Schaap P.J."/>
            <person name="Turner G."/>
            <person name="de Vries R.P."/>
            <person name="Albang R."/>
            <person name="Albermann K."/>
            <person name="Andersen M.R."/>
            <person name="Bendtsen J.D."/>
            <person name="Benen J.A.E."/>
            <person name="van den Berg M."/>
            <person name="Breestraat S."/>
            <person name="Caddick M.X."/>
            <person name="Contreras R."/>
            <person name="Cornell M."/>
            <person name="Coutinho P.M."/>
            <person name="Danchin E.G.J."/>
            <person name="Debets A.J.M."/>
            <person name="Dekker P."/>
            <person name="van Dijck P.W.M."/>
            <person name="van Dijk A."/>
            <person name="Dijkhuizen L."/>
            <person name="Driessen A.J.M."/>
            <person name="d'Enfert C."/>
            <person name="Geysens S."/>
            <person name="Goosen C."/>
            <person name="Groot G.S.P."/>
            <person name="de Groot P.W.J."/>
            <person name="Guillemette T."/>
            <person name="Henrissat B."/>
            <person name="Herweijer M."/>
            <person name="van den Hombergh J.P.T.W."/>
            <person name="van den Hondel C.A.M.J.J."/>
            <person name="van der Heijden R.T.J.M."/>
            <person name="van der Kaaij R.M."/>
            <person name="Klis F.M."/>
            <person name="Kools H.J."/>
            <person name="Kubicek C.P."/>
            <person name="van Kuyk P.A."/>
            <person name="Lauber J."/>
            <person name="Lu X."/>
            <person name="van der Maarel M.J.E.C."/>
            <person name="Meulenberg R."/>
            <person name="Menke H."/>
            <person name="Mortimer M.A."/>
            <person name="Nielsen J."/>
            <person name="Oliver S.G."/>
            <person name="Olsthoorn M."/>
            <person name="Pal K."/>
            <person name="van Peij N.N.M.E."/>
            <person name="Ram A.F.J."/>
            <person name="Rinas U."/>
            <person name="Roubos J.A."/>
            <person name="Sagt C.M.J."/>
            <person name="Schmoll M."/>
            <person name="Sun J."/>
            <person name="Ussery D."/>
            <person name="Varga J."/>
            <person name="Vervecken W."/>
            <person name="van de Vondervoort P.J.J."/>
            <person name="Wedler H."/>
            <person name="Woesten H.A.B."/>
            <person name="Zeng A.-P."/>
            <person name="van Ooyen A.J.J."/>
            <person name="Visser J."/>
            <person name="Stam H."/>
        </authorList>
    </citation>
    <scope>NUCLEOTIDE SEQUENCE [LARGE SCALE GENOMIC DNA]</scope>
    <source>
        <strain>ATCC MYA-4892 / CBS 513.88 / FGSC A1513</strain>
    </source>
</reference>
<name>ATG17_ASPNC</name>
<proteinExistence type="inferred from homology"/>
<keyword id="KW-0072">Autophagy</keyword>
<keyword id="KW-0175">Coiled coil</keyword>
<keyword id="KW-0963">Cytoplasm</keyword>
<keyword id="KW-0472">Membrane</keyword>
<keyword id="KW-1185">Reference proteome</keyword>
<dbReference type="EMBL" id="AM270009">
    <property type="protein sequence ID" value="CAK47659.1"/>
    <property type="molecule type" value="Genomic_DNA"/>
</dbReference>
<dbReference type="RefSeq" id="XP_001399620.1">
    <property type="nucleotide sequence ID" value="XM_001399583.2"/>
</dbReference>
<dbReference type="SMR" id="A2QCV0"/>
<dbReference type="EnsemblFungi" id="CAK47659">
    <property type="protein sequence ID" value="CAK47659"/>
    <property type="gene ID" value="An02g04820"/>
</dbReference>
<dbReference type="GeneID" id="4978971"/>
<dbReference type="KEGG" id="ang:An02g04820"/>
<dbReference type="VEuPathDB" id="FungiDB:An02g04820"/>
<dbReference type="HOGENOM" id="CLU_028356_0_0_1"/>
<dbReference type="Proteomes" id="UP000006706">
    <property type="component" value="Chromosome 4R"/>
</dbReference>
<dbReference type="GO" id="GO:1990316">
    <property type="term" value="C:Atg1/ULK1 kinase complex"/>
    <property type="evidence" value="ECO:0007669"/>
    <property type="project" value="TreeGrafter"/>
</dbReference>
<dbReference type="GO" id="GO:0034045">
    <property type="term" value="C:phagophore assembly site membrane"/>
    <property type="evidence" value="ECO:0007669"/>
    <property type="project" value="UniProtKB-SubCell"/>
</dbReference>
<dbReference type="GO" id="GO:0060090">
    <property type="term" value="F:molecular adaptor activity"/>
    <property type="evidence" value="ECO:0007669"/>
    <property type="project" value="TreeGrafter"/>
</dbReference>
<dbReference type="GO" id="GO:0030295">
    <property type="term" value="F:protein kinase activator activity"/>
    <property type="evidence" value="ECO:0007669"/>
    <property type="project" value="TreeGrafter"/>
</dbReference>
<dbReference type="GO" id="GO:0000045">
    <property type="term" value="P:autophagosome assembly"/>
    <property type="evidence" value="ECO:0007669"/>
    <property type="project" value="TreeGrafter"/>
</dbReference>
<dbReference type="GO" id="GO:0000422">
    <property type="term" value="P:autophagy of mitochondrion"/>
    <property type="evidence" value="ECO:0007669"/>
    <property type="project" value="TreeGrafter"/>
</dbReference>
<dbReference type="GO" id="GO:0034727">
    <property type="term" value="P:piecemeal microautophagy of the nucleus"/>
    <property type="evidence" value="ECO:0007669"/>
    <property type="project" value="TreeGrafter"/>
</dbReference>
<dbReference type="InterPro" id="IPR007240">
    <property type="entry name" value="Atg17"/>
</dbReference>
<dbReference type="InterPro" id="IPR045326">
    <property type="entry name" value="ATG17-like_dom"/>
</dbReference>
<dbReference type="PANTHER" id="PTHR28005">
    <property type="entry name" value="AUTOPHAGY-RELATED PROTEIN 17"/>
    <property type="match status" value="1"/>
</dbReference>
<dbReference type="PANTHER" id="PTHR28005:SF1">
    <property type="entry name" value="AUTOPHAGY-RELATED PROTEIN 17"/>
    <property type="match status" value="1"/>
</dbReference>
<dbReference type="Pfam" id="PF04108">
    <property type="entry name" value="ATG17_like"/>
    <property type="match status" value="1"/>
</dbReference>
<protein>
    <recommendedName>
        <fullName>Autophagy-related protein 17</fullName>
    </recommendedName>
</protein>
<feature type="chain" id="PRO_0000317980" description="Autophagy-related protein 17">
    <location>
        <begin position="1"/>
        <end position="546"/>
    </location>
</feature>
<feature type="region of interest" description="Disordered" evidence="3">
    <location>
        <begin position="1"/>
        <end position="26"/>
    </location>
</feature>
<feature type="region of interest" description="Disordered" evidence="3">
    <location>
        <begin position="204"/>
        <end position="225"/>
    </location>
</feature>
<feature type="region of interest" description="Disordered" evidence="3">
    <location>
        <begin position="487"/>
        <end position="527"/>
    </location>
</feature>
<feature type="coiled-coil region" evidence="2">
    <location>
        <begin position="312"/>
        <end position="341"/>
    </location>
</feature>
<feature type="coiled-coil region" evidence="2">
    <location>
        <begin position="424"/>
        <end position="447"/>
    </location>
</feature>
<feature type="compositionally biased region" description="Low complexity" evidence="3">
    <location>
        <begin position="1"/>
        <end position="22"/>
    </location>
</feature>
<feature type="compositionally biased region" description="Low complexity" evidence="3">
    <location>
        <begin position="496"/>
        <end position="506"/>
    </location>
</feature>
<comment type="function">
    <text evidence="1">Autophagy-specific protein that functions in response to autophagy-inducing signals as a scaffold to recruit other ATG proteins to organize pre-autophagosomal structure (PAS) formation. Modulates the timing and magnitude of the autophagy response, such as the size of the sequestering vesicles. Plays particularly a role in pexophagy and nucleophagy (By similarity).</text>
</comment>
<comment type="subcellular location">
    <subcellularLocation>
        <location evidence="1">Cytoplasm</location>
    </subcellularLocation>
    <subcellularLocation>
        <location evidence="1">Preautophagosomal structure membrane</location>
        <topology evidence="1">Peripheral membrane protein</topology>
    </subcellularLocation>
</comment>
<comment type="similarity">
    <text evidence="4">Belongs to the ATG17 family.</text>
</comment>